<dbReference type="EC" id="2.1.1.-" evidence="1"/>
<dbReference type="EMBL" id="CP000855">
    <property type="protein sequence ID" value="ACJ16789.1"/>
    <property type="molecule type" value="Genomic_DNA"/>
</dbReference>
<dbReference type="RefSeq" id="WP_012572261.1">
    <property type="nucleotide sequence ID" value="NC_011529.1"/>
</dbReference>
<dbReference type="SMR" id="B6YXH6"/>
<dbReference type="STRING" id="523850.TON_1300"/>
<dbReference type="GeneID" id="7018327"/>
<dbReference type="KEGG" id="ton:TON_1300"/>
<dbReference type="PATRIC" id="fig|523850.10.peg.1307"/>
<dbReference type="eggNOG" id="arCOG00078">
    <property type="taxonomic scope" value="Archaea"/>
</dbReference>
<dbReference type="HOGENOM" id="CLU_059055_2_0_2"/>
<dbReference type="OrthoDB" id="6244at2157"/>
<dbReference type="Proteomes" id="UP000002727">
    <property type="component" value="Chromosome"/>
</dbReference>
<dbReference type="GO" id="GO:1990259">
    <property type="term" value="F:histone H2AQ104 methyltransferase activity"/>
    <property type="evidence" value="ECO:0007669"/>
    <property type="project" value="TreeGrafter"/>
</dbReference>
<dbReference type="GO" id="GO:0003723">
    <property type="term" value="F:RNA binding"/>
    <property type="evidence" value="ECO:0007669"/>
    <property type="project" value="UniProtKB-UniRule"/>
</dbReference>
<dbReference type="GO" id="GO:0008649">
    <property type="term" value="F:rRNA methyltransferase activity"/>
    <property type="evidence" value="ECO:0007669"/>
    <property type="project" value="TreeGrafter"/>
</dbReference>
<dbReference type="GO" id="GO:0000494">
    <property type="term" value="P:box C/D sno(s)RNA 3'-end processing"/>
    <property type="evidence" value="ECO:0007669"/>
    <property type="project" value="TreeGrafter"/>
</dbReference>
<dbReference type="GO" id="GO:0008033">
    <property type="term" value="P:tRNA processing"/>
    <property type="evidence" value="ECO:0007669"/>
    <property type="project" value="UniProtKB-UniRule"/>
</dbReference>
<dbReference type="CDD" id="cd02440">
    <property type="entry name" value="AdoMet_MTases"/>
    <property type="match status" value="1"/>
</dbReference>
<dbReference type="FunFam" id="3.30.200.20:FF:000613">
    <property type="entry name" value="Fibrillarin-like rRNA/tRNA 2'-O-methyltransferase"/>
    <property type="match status" value="1"/>
</dbReference>
<dbReference type="FunFam" id="3.40.50.150:FF:000343">
    <property type="entry name" value="Fibrillarin-like rRNA/tRNA 2'-O-methyltransferase"/>
    <property type="match status" value="1"/>
</dbReference>
<dbReference type="Gene3D" id="3.30.200.20">
    <property type="entry name" value="Phosphorylase Kinase, domain 1"/>
    <property type="match status" value="1"/>
</dbReference>
<dbReference type="Gene3D" id="3.40.50.150">
    <property type="entry name" value="Vaccinia Virus protein VP39"/>
    <property type="match status" value="1"/>
</dbReference>
<dbReference type="HAMAP" id="MF_00351">
    <property type="entry name" value="RNA_methyltransf_FlpA"/>
    <property type="match status" value="1"/>
</dbReference>
<dbReference type="InterPro" id="IPR000692">
    <property type="entry name" value="Fibrillarin"/>
</dbReference>
<dbReference type="InterPro" id="IPR020813">
    <property type="entry name" value="Fibrillarin_CS"/>
</dbReference>
<dbReference type="InterPro" id="IPR029063">
    <property type="entry name" value="SAM-dependent_MTases_sf"/>
</dbReference>
<dbReference type="NCBIfam" id="NF003276">
    <property type="entry name" value="PRK04266.1-2"/>
    <property type="match status" value="1"/>
</dbReference>
<dbReference type="NCBIfam" id="NF003277">
    <property type="entry name" value="PRK04266.1-3"/>
    <property type="match status" value="1"/>
</dbReference>
<dbReference type="PANTHER" id="PTHR10335:SF17">
    <property type="entry name" value="FIBRILLARIN"/>
    <property type="match status" value="1"/>
</dbReference>
<dbReference type="PANTHER" id="PTHR10335">
    <property type="entry name" value="RRNA 2-O-METHYLTRANSFERASE FIBRILLARIN"/>
    <property type="match status" value="1"/>
</dbReference>
<dbReference type="Pfam" id="PF01269">
    <property type="entry name" value="Fibrillarin"/>
    <property type="match status" value="1"/>
</dbReference>
<dbReference type="PIRSF" id="PIRSF006540">
    <property type="entry name" value="Nop17p"/>
    <property type="match status" value="1"/>
</dbReference>
<dbReference type="PRINTS" id="PR00052">
    <property type="entry name" value="FIBRILLARIN"/>
</dbReference>
<dbReference type="SMART" id="SM01206">
    <property type="entry name" value="Fibrillarin"/>
    <property type="match status" value="1"/>
</dbReference>
<dbReference type="SUPFAM" id="SSF53335">
    <property type="entry name" value="S-adenosyl-L-methionine-dependent methyltransferases"/>
    <property type="match status" value="1"/>
</dbReference>
<dbReference type="PROSITE" id="PS00566">
    <property type="entry name" value="FIBRILLARIN"/>
    <property type="match status" value="1"/>
</dbReference>
<name>FLPA_THEON</name>
<proteinExistence type="inferred from homology"/>
<keyword id="KW-0489">Methyltransferase</keyword>
<keyword id="KW-0694">RNA-binding</keyword>
<keyword id="KW-0698">rRNA processing</keyword>
<keyword id="KW-0808">Transferase</keyword>
<keyword id="KW-0819">tRNA processing</keyword>
<organism>
    <name type="scientific">Thermococcus onnurineus (strain NA1)</name>
    <dbReference type="NCBI Taxonomy" id="523850"/>
    <lineage>
        <taxon>Archaea</taxon>
        <taxon>Methanobacteriati</taxon>
        <taxon>Methanobacteriota</taxon>
        <taxon>Thermococci</taxon>
        <taxon>Thermococcales</taxon>
        <taxon>Thermococcaceae</taxon>
        <taxon>Thermococcus</taxon>
    </lineage>
</organism>
<accession>B6YXH6</accession>
<gene>
    <name evidence="1" type="primary">flpA</name>
    <name type="ordered locus">TON_1300</name>
</gene>
<protein>
    <recommendedName>
        <fullName evidence="1">Fibrillarin-like rRNA/tRNA 2'-O-methyltransferase</fullName>
        <ecNumber evidence="1">2.1.1.-</ecNumber>
    </recommendedName>
</protein>
<comment type="function">
    <text evidence="1">Involved in pre-rRNA and tRNA processing. Utilizes the methyl donor S-adenosyl-L-methionine to catalyze the site-specific 2'-hydroxyl methylation of ribose moieties in rRNA and tRNA. Site specificity is provided by a guide RNA that base pairs with the substrate. Methylation occurs at a characteristic distance from the sequence involved in base pairing with the guide RNA.</text>
</comment>
<comment type="subunit">
    <text evidence="1">Interacts with nop5. Component of box C/D small ribonucleoprotein (sRNP) particles that contain rpl7ae, FlpA and nop5, plus a guide RNA.</text>
</comment>
<comment type="similarity">
    <text evidence="1">Belongs to the methyltransferase superfamily. Fibrillarin family.</text>
</comment>
<feature type="chain" id="PRO_1000120519" description="Fibrillarin-like rRNA/tRNA 2'-O-methyltransferase">
    <location>
        <begin position="1"/>
        <end position="226"/>
    </location>
</feature>
<feature type="binding site" evidence="1">
    <location>
        <begin position="85"/>
        <end position="86"/>
    </location>
    <ligand>
        <name>S-adenosyl-L-methionine</name>
        <dbReference type="ChEBI" id="CHEBI:59789"/>
    </ligand>
</feature>
<feature type="binding site" evidence="1">
    <location>
        <begin position="104"/>
        <end position="105"/>
    </location>
    <ligand>
        <name>S-adenosyl-L-methionine</name>
        <dbReference type="ChEBI" id="CHEBI:59789"/>
    </ligand>
</feature>
<feature type="binding site" evidence="1">
    <location>
        <begin position="129"/>
        <end position="130"/>
    </location>
    <ligand>
        <name>S-adenosyl-L-methionine</name>
        <dbReference type="ChEBI" id="CHEBI:59789"/>
    </ligand>
</feature>
<feature type="binding site" evidence="1">
    <location>
        <begin position="149"/>
        <end position="152"/>
    </location>
    <ligand>
        <name>S-adenosyl-L-methionine</name>
        <dbReference type="ChEBI" id="CHEBI:59789"/>
    </ligand>
</feature>
<evidence type="ECO:0000255" key="1">
    <source>
        <dbReference type="HAMAP-Rule" id="MF_00351"/>
    </source>
</evidence>
<sequence>MKIKKHKFPGVYVFIDEDGSEKIATKNLVPGQKVYGERLIKFEGEEYRVWNPRRSKLGAAILNGLKHFPIKPGSTVLYLGVASGTTASHVSDIVGWEGKVFGVEFSPRVLRELVPIVEERRNIVPILGDATKPEGYRALVPKVDVIFEDVAQPTQAKILIDNAKVFLKSGGYGMISVKSRSIDVTKEPEQVFKEVEKELATYFEVVERLSLEPYEKDHALFVVRKP</sequence>
<reference key="1">
    <citation type="journal article" date="2008" name="J. Bacteriol.">
        <title>The complete genome sequence of Thermococcus onnurineus NA1 reveals a mixed heterotrophic and carboxydotrophic metabolism.</title>
        <authorList>
            <person name="Lee H.S."/>
            <person name="Kang S.G."/>
            <person name="Bae S.S."/>
            <person name="Lim J.K."/>
            <person name="Cho Y."/>
            <person name="Kim Y.J."/>
            <person name="Jeon J.H."/>
            <person name="Cha S.-S."/>
            <person name="Kwon K.K."/>
            <person name="Kim H.-T."/>
            <person name="Park C.-J."/>
            <person name="Lee H.-W."/>
            <person name="Kim S.I."/>
            <person name="Chun J."/>
            <person name="Colwell R.R."/>
            <person name="Kim S.-J."/>
            <person name="Lee J.-H."/>
        </authorList>
    </citation>
    <scope>NUCLEOTIDE SEQUENCE [LARGE SCALE GENOMIC DNA]</scope>
    <source>
        <strain>NA1</strain>
    </source>
</reference>